<sequence>MTALDWRSALTADEQRSVRALVTATTAVDGVAPVGEQVLRELGQQRTEHLLVAGSRPGGPIIGYLNLSPPRGAGGAMAELVVHPQSRRRGIGTAMARAALAKTAGRNQFWAHGTLDPARATASALGLVGVRELIQMRRPLRDIPEPTIPDGVVIRTYAGTSDDAELLRVNNAAFAGHPEQGGWTAVQLAERRGEAWFDPDGLILAFGDSPRERPGRLLGFHWTKVHPDHPGLGEVYVLGVDPAAQRRGLGQMLTSIGIVSLARRLGGRKTLDPAVEPAVLLYVESDNVAAVRTYQSLGFTTYSVDTAYALAGTDN</sequence>
<evidence type="ECO:0000255" key="1">
    <source>
        <dbReference type="HAMAP-Rule" id="MF_01698"/>
    </source>
</evidence>
<organism>
    <name type="scientific">Mycobacterium tuberculosis (strain ATCC 25177 / H37Ra)</name>
    <dbReference type="NCBI Taxonomy" id="419947"/>
    <lineage>
        <taxon>Bacteria</taxon>
        <taxon>Bacillati</taxon>
        <taxon>Actinomycetota</taxon>
        <taxon>Actinomycetes</taxon>
        <taxon>Mycobacteriales</taxon>
        <taxon>Mycobacteriaceae</taxon>
        <taxon>Mycobacterium</taxon>
        <taxon>Mycobacterium tuberculosis complex</taxon>
    </lineage>
</organism>
<gene>
    <name evidence="1" type="primary">mshD</name>
    <name type="ordered locus">MRA_0829</name>
</gene>
<comment type="function">
    <text evidence="1">Catalyzes the transfer of acetyl from acetyl-CoA to desacetylmycothiol (Cys-GlcN-Ins) to form mycothiol.</text>
</comment>
<comment type="catalytic activity">
    <reaction evidence="1">
        <text>1D-myo-inositol 2-(L-cysteinylamino)-2-deoxy-alpha-D-glucopyranoside + acetyl-CoA = mycothiol + CoA + H(+)</text>
        <dbReference type="Rhea" id="RHEA:26172"/>
        <dbReference type="ChEBI" id="CHEBI:15378"/>
        <dbReference type="ChEBI" id="CHEBI:16768"/>
        <dbReference type="ChEBI" id="CHEBI:57287"/>
        <dbReference type="ChEBI" id="CHEBI:57288"/>
        <dbReference type="ChEBI" id="CHEBI:58887"/>
        <dbReference type="EC" id="2.3.1.189"/>
    </reaction>
</comment>
<comment type="subunit">
    <text evidence="1">Monomer.</text>
</comment>
<comment type="similarity">
    <text evidence="1">Belongs to the acetyltransferase family. MshD subfamily.</text>
</comment>
<dbReference type="EC" id="2.3.1.189" evidence="1"/>
<dbReference type="EMBL" id="CP000611">
    <property type="protein sequence ID" value="ABQ72558.1"/>
    <property type="molecule type" value="Genomic_DNA"/>
</dbReference>
<dbReference type="RefSeq" id="WP_003404307.1">
    <property type="nucleotide sequence ID" value="NZ_CP016972.1"/>
</dbReference>
<dbReference type="SMR" id="A5U0K8"/>
<dbReference type="KEGG" id="mra:MRA_0829"/>
<dbReference type="eggNOG" id="COG0454">
    <property type="taxonomic scope" value="Bacteria"/>
</dbReference>
<dbReference type="eggNOG" id="COG0456">
    <property type="taxonomic scope" value="Bacteria"/>
</dbReference>
<dbReference type="HOGENOM" id="CLU_068014_0_0_11"/>
<dbReference type="Proteomes" id="UP000001988">
    <property type="component" value="Chromosome"/>
</dbReference>
<dbReference type="GO" id="GO:0035447">
    <property type="term" value="F:mycothiol synthase activity"/>
    <property type="evidence" value="ECO:0007669"/>
    <property type="project" value="UniProtKB-UniRule"/>
</dbReference>
<dbReference type="GO" id="GO:0008999">
    <property type="term" value="F:protein-N-terminal-alanine acetyltransferase activity"/>
    <property type="evidence" value="ECO:0007669"/>
    <property type="project" value="TreeGrafter"/>
</dbReference>
<dbReference type="GO" id="GO:0010125">
    <property type="term" value="P:mycothiol biosynthetic process"/>
    <property type="evidence" value="ECO:0007669"/>
    <property type="project" value="UniProtKB-UniRule"/>
</dbReference>
<dbReference type="CDD" id="cd04301">
    <property type="entry name" value="NAT_SF"/>
    <property type="match status" value="2"/>
</dbReference>
<dbReference type="FunFam" id="3.40.630.30:FF:000089">
    <property type="entry name" value="Mycothiol acetyltransferase"/>
    <property type="match status" value="1"/>
</dbReference>
<dbReference type="Gene3D" id="3.40.630.30">
    <property type="match status" value="1"/>
</dbReference>
<dbReference type="HAMAP" id="MF_01698">
    <property type="entry name" value="MshD"/>
    <property type="match status" value="1"/>
</dbReference>
<dbReference type="InterPro" id="IPR016181">
    <property type="entry name" value="Acyl_CoA_acyltransferase"/>
</dbReference>
<dbReference type="InterPro" id="IPR000182">
    <property type="entry name" value="GNAT_dom"/>
</dbReference>
<dbReference type="InterPro" id="IPR050276">
    <property type="entry name" value="MshD_Acetyltransferase"/>
</dbReference>
<dbReference type="InterPro" id="IPR017813">
    <property type="entry name" value="Mycothiol_AcTrfase"/>
</dbReference>
<dbReference type="NCBIfam" id="TIGR03448">
    <property type="entry name" value="mycothiol_MshD"/>
    <property type="match status" value="1"/>
</dbReference>
<dbReference type="PANTHER" id="PTHR43617">
    <property type="entry name" value="L-AMINO ACID N-ACETYLTRANSFERASE"/>
    <property type="match status" value="1"/>
</dbReference>
<dbReference type="PANTHER" id="PTHR43617:SF31">
    <property type="entry name" value="MYCOTHIOL ACETYLTRANSFERASE"/>
    <property type="match status" value="1"/>
</dbReference>
<dbReference type="Pfam" id="PF00583">
    <property type="entry name" value="Acetyltransf_1"/>
    <property type="match status" value="2"/>
</dbReference>
<dbReference type="PIRSF" id="PIRSF021524">
    <property type="entry name" value="MSH_acetyltransferase"/>
    <property type="match status" value="1"/>
</dbReference>
<dbReference type="SUPFAM" id="SSF55729">
    <property type="entry name" value="Acyl-CoA N-acyltransferases (Nat)"/>
    <property type="match status" value="1"/>
</dbReference>
<dbReference type="PROSITE" id="PS51186">
    <property type="entry name" value="GNAT"/>
    <property type="match status" value="2"/>
</dbReference>
<reference key="1">
    <citation type="journal article" date="2008" name="PLoS ONE">
        <title>Genetic basis of virulence attenuation revealed by comparative genomic analysis of Mycobacterium tuberculosis strain H37Ra versus H37Rv.</title>
        <authorList>
            <person name="Zheng H."/>
            <person name="Lu L."/>
            <person name="Wang B."/>
            <person name="Pu S."/>
            <person name="Zhang X."/>
            <person name="Zhu G."/>
            <person name="Shi W."/>
            <person name="Zhang L."/>
            <person name="Wang H."/>
            <person name="Wang S."/>
            <person name="Zhao G."/>
            <person name="Zhang Y."/>
        </authorList>
    </citation>
    <scope>NUCLEOTIDE SEQUENCE [LARGE SCALE GENOMIC DNA]</scope>
    <source>
        <strain>ATCC 25177 / H37Ra</strain>
    </source>
</reference>
<feature type="chain" id="PRO_0000400279" description="Mycothiol acetyltransferase">
    <location>
        <begin position="1"/>
        <end position="315"/>
    </location>
</feature>
<feature type="domain" description="N-acetyltransferase 1" evidence="1">
    <location>
        <begin position="4"/>
        <end position="141"/>
    </location>
</feature>
<feature type="domain" description="N-acetyltransferase 2" evidence="1">
    <location>
        <begin position="152"/>
        <end position="315"/>
    </location>
</feature>
<feature type="binding site" evidence="1">
    <location>
        <position position="36"/>
    </location>
    <ligand>
        <name>1D-myo-inositol 2-(L-cysteinylamino)-2-deoxy-alpha-D-glucopyranoside</name>
        <dbReference type="ChEBI" id="CHEBI:58887"/>
    </ligand>
</feature>
<feature type="binding site" evidence="1">
    <location>
        <begin position="80"/>
        <end position="82"/>
    </location>
    <ligand>
        <name>acetyl-CoA</name>
        <dbReference type="ChEBI" id="CHEBI:57288"/>
        <label>1</label>
    </ligand>
</feature>
<feature type="binding site" evidence="1">
    <location>
        <begin position="88"/>
        <end position="93"/>
    </location>
    <ligand>
        <name>acetyl-CoA</name>
        <dbReference type="ChEBI" id="CHEBI:57288"/>
        <label>1</label>
    </ligand>
</feature>
<feature type="binding site" evidence="1">
    <location>
        <position position="179"/>
    </location>
    <ligand>
        <name>1D-myo-inositol 2-(L-cysteinylamino)-2-deoxy-alpha-D-glucopyranoside</name>
        <dbReference type="ChEBI" id="CHEBI:58887"/>
    </ligand>
</feature>
<feature type="binding site" evidence="1">
    <location>
        <position position="224"/>
    </location>
    <ligand>
        <name>1D-myo-inositol 2-(L-cysteinylamino)-2-deoxy-alpha-D-glucopyranoside</name>
        <dbReference type="ChEBI" id="CHEBI:58887"/>
    </ligand>
</feature>
<feature type="binding site" evidence="1">
    <location>
        <position position="234"/>
    </location>
    <ligand>
        <name>1D-myo-inositol 2-(L-cysteinylamino)-2-deoxy-alpha-D-glucopyranoside</name>
        <dbReference type="ChEBI" id="CHEBI:58887"/>
    </ligand>
</feature>
<feature type="binding site" evidence="1">
    <location>
        <begin position="238"/>
        <end position="240"/>
    </location>
    <ligand>
        <name>acetyl-CoA</name>
        <dbReference type="ChEBI" id="CHEBI:57288"/>
        <label>2</label>
    </ligand>
</feature>
<feature type="binding site" evidence="1">
    <location>
        <begin position="245"/>
        <end position="251"/>
    </location>
    <ligand>
        <name>acetyl-CoA</name>
        <dbReference type="ChEBI" id="CHEBI:57288"/>
        <label>2</label>
    </ligand>
</feature>
<feature type="binding site" evidence="1">
    <location>
        <position position="282"/>
    </location>
    <ligand>
        <name>1D-myo-inositol 2-(L-cysteinylamino)-2-deoxy-alpha-D-glucopyranoside</name>
        <dbReference type="ChEBI" id="CHEBI:58887"/>
    </ligand>
</feature>
<feature type="binding site" evidence="1">
    <location>
        <begin position="287"/>
        <end position="292"/>
    </location>
    <ligand>
        <name>acetyl-CoA</name>
        <dbReference type="ChEBI" id="CHEBI:57288"/>
        <label>2</label>
    </ligand>
</feature>
<proteinExistence type="inferred from homology"/>
<name>MSHD_MYCTA</name>
<keyword id="KW-0012">Acyltransferase</keyword>
<keyword id="KW-1185">Reference proteome</keyword>
<keyword id="KW-0677">Repeat</keyword>
<keyword id="KW-0808">Transferase</keyword>
<accession>A5U0K8</accession>
<protein>
    <recommendedName>
        <fullName evidence="1">Mycothiol acetyltransferase</fullName>
        <shortName evidence="1">MSH acetyltransferase</shortName>
        <ecNumber evidence="1">2.3.1.189</ecNumber>
    </recommendedName>
    <alternativeName>
        <fullName evidence="1">Mycothiol synthase</fullName>
    </alternativeName>
</protein>